<gene>
    <name evidence="1" type="primary">metG</name>
    <name type="ordered locus">SACE_0799</name>
</gene>
<evidence type="ECO:0000255" key="1">
    <source>
        <dbReference type="HAMAP-Rule" id="MF_00098"/>
    </source>
</evidence>
<keyword id="KW-0030">Aminoacyl-tRNA synthetase</keyword>
<keyword id="KW-0067">ATP-binding</keyword>
<keyword id="KW-0963">Cytoplasm</keyword>
<keyword id="KW-0436">Ligase</keyword>
<keyword id="KW-0479">Metal-binding</keyword>
<keyword id="KW-0547">Nucleotide-binding</keyword>
<keyword id="KW-0648">Protein biosynthesis</keyword>
<keyword id="KW-1185">Reference proteome</keyword>
<keyword id="KW-0862">Zinc</keyword>
<protein>
    <recommendedName>
        <fullName evidence="1">Methionine--tRNA ligase</fullName>
        <ecNumber evidence="1">6.1.1.10</ecNumber>
    </recommendedName>
    <alternativeName>
        <fullName evidence="1">Methionyl-tRNA synthetase</fullName>
        <shortName evidence="1">MetRS</shortName>
    </alternativeName>
</protein>
<name>SYM_SACEN</name>
<sequence length="593" mass="66120">MTAVAWPYANGPRHIGHVSGFGVPSDVFSRYQRMAGNRVLMVSGTDEHGTPISVQADKEGLSTRELADKYNRVITEDLQGLGLSYDLFTRTTTGNHYEVVQQIFLALHRNGYIIPKTTTGAISPSTGRTLPDRYIEGTCPICGYDGARGDQCDNCGNQLDPAELINPVSRINGEKPDFVETEHLFLDLSAFTESLGKWLSTRTGWRSNVLKFTQNLVEDMRPRAISRDLDWGVPIPLDGWRDQSMKRLYVWFDAVIGYFSASVEWARRTGDPDAWKQFWTDPSAQGYYFMGKDNITFHAQIWPALLMGHNGQGDKGGEVGPYGQLNLPDEIVSSEFLTMSGSKFSTSRGTVIYVRDFLREFGPDTLRYFISVAGPENQDTDFTWDEFVRRVNFELANEWGNLVNRSVSMAAKNNGAVPAPTSPRAADEELKTLSRNAFETVGGHLQRSRFKAAAQEAMRVVSAANKYLSDQEPWKLKEDPDRRDAVLHTALQVVSDANTLLTPFLPHSAQKVHELLGGTGVWSAQPELREVSDLDVPEREYPVLMGDYAAEQASWESTEIEVGRPLHKPTPLFAKLDAALGETGPEWAPIEKS</sequence>
<proteinExistence type="inferred from homology"/>
<organism>
    <name type="scientific">Saccharopolyspora erythraea (strain ATCC 11635 / DSM 40517 / JCM 4748 / NBRC 13426 / NCIMB 8594 / NRRL 2338)</name>
    <dbReference type="NCBI Taxonomy" id="405948"/>
    <lineage>
        <taxon>Bacteria</taxon>
        <taxon>Bacillati</taxon>
        <taxon>Actinomycetota</taxon>
        <taxon>Actinomycetes</taxon>
        <taxon>Pseudonocardiales</taxon>
        <taxon>Pseudonocardiaceae</taxon>
        <taxon>Saccharopolyspora</taxon>
    </lineage>
</organism>
<accession>A4F7W6</accession>
<comment type="function">
    <text evidence="1">Is required not only for elongation of protein synthesis but also for the initiation of all mRNA translation through initiator tRNA(fMet) aminoacylation.</text>
</comment>
<comment type="catalytic activity">
    <reaction evidence="1">
        <text>tRNA(Met) + L-methionine + ATP = L-methionyl-tRNA(Met) + AMP + diphosphate</text>
        <dbReference type="Rhea" id="RHEA:13481"/>
        <dbReference type="Rhea" id="RHEA-COMP:9667"/>
        <dbReference type="Rhea" id="RHEA-COMP:9698"/>
        <dbReference type="ChEBI" id="CHEBI:30616"/>
        <dbReference type="ChEBI" id="CHEBI:33019"/>
        <dbReference type="ChEBI" id="CHEBI:57844"/>
        <dbReference type="ChEBI" id="CHEBI:78442"/>
        <dbReference type="ChEBI" id="CHEBI:78530"/>
        <dbReference type="ChEBI" id="CHEBI:456215"/>
        <dbReference type="EC" id="6.1.1.10"/>
    </reaction>
</comment>
<comment type="cofactor">
    <cofactor evidence="1">
        <name>Zn(2+)</name>
        <dbReference type="ChEBI" id="CHEBI:29105"/>
    </cofactor>
    <text evidence="1">Binds 1 zinc ion per subunit.</text>
</comment>
<comment type="subunit">
    <text evidence="1">Monomer.</text>
</comment>
<comment type="subcellular location">
    <subcellularLocation>
        <location evidence="1">Cytoplasm</location>
    </subcellularLocation>
</comment>
<comment type="similarity">
    <text evidence="1">Belongs to the class-I aminoacyl-tRNA synthetase family. MetG type 1 subfamily.</text>
</comment>
<dbReference type="EC" id="6.1.1.10" evidence="1"/>
<dbReference type="EMBL" id="AM420293">
    <property type="protein sequence ID" value="CAM00140.1"/>
    <property type="molecule type" value="Genomic_DNA"/>
</dbReference>
<dbReference type="SMR" id="A4F7W6"/>
<dbReference type="STRING" id="405948.SACE_0799"/>
<dbReference type="KEGG" id="sen:SACE_0799"/>
<dbReference type="eggNOG" id="COG0143">
    <property type="taxonomic scope" value="Bacteria"/>
</dbReference>
<dbReference type="HOGENOM" id="CLU_009710_1_2_11"/>
<dbReference type="Proteomes" id="UP000006728">
    <property type="component" value="Chromosome"/>
</dbReference>
<dbReference type="GO" id="GO:0005829">
    <property type="term" value="C:cytosol"/>
    <property type="evidence" value="ECO:0007669"/>
    <property type="project" value="TreeGrafter"/>
</dbReference>
<dbReference type="GO" id="GO:0005524">
    <property type="term" value="F:ATP binding"/>
    <property type="evidence" value="ECO:0007669"/>
    <property type="project" value="UniProtKB-UniRule"/>
</dbReference>
<dbReference type="GO" id="GO:0046872">
    <property type="term" value="F:metal ion binding"/>
    <property type="evidence" value="ECO:0007669"/>
    <property type="project" value="UniProtKB-KW"/>
</dbReference>
<dbReference type="GO" id="GO:0004825">
    <property type="term" value="F:methionine-tRNA ligase activity"/>
    <property type="evidence" value="ECO:0007669"/>
    <property type="project" value="UniProtKB-UniRule"/>
</dbReference>
<dbReference type="GO" id="GO:0006431">
    <property type="term" value="P:methionyl-tRNA aminoacylation"/>
    <property type="evidence" value="ECO:0007669"/>
    <property type="project" value="UniProtKB-UniRule"/>
</dbReference>
<dbReference type="CDD" id="cd07957">
    <property type="entry name" value="Anticodon_Ia_Met"/>
    <property type="match status" value="1"/>
</dbReference>
<dbReference type="CDD" id="cd00814">
    <property type="entry name" value="MetRS_core"/>
    <property type="match status" value="1"/>
</dbReference>
<dbReference type="FunFam" id="2.20.28.20:FF:000001">
    <property type="entry name" value="Methionine--tRNA ligase"/>
    <property type="match status" value="1"/>
</dbReference>
<dbReference type="Gene3D" id="3.40.50.620">
    <property type="entry name" value="HUPs"/>
    <property type="match status" value="1"/>
</dbReference>
<dbReference type="Gene3D" id="1.10.730.10">
    <property type="entry name" value="Isoleucyl-tRNA Synthetase, Domain 1"/>
    <property type="match status" value="1"/>
</dbReference>
<dbReference type="Gene3D" id="2.20.28.20">
    <property type="entry name" value="Methionyl-tRNA synthetase, Zn-domain"/>
    <property type="match status" value="1"/>
</dbReference>
<dbReference type="HAMAP" id="MF_00098">
    <property type="entry name" value="Met_tRNA_synth_type1"/>
    <property type="match status" value="1"/>
</dbReference>
<dbReference type="InterPro" id="IPR041872">
    <property type="entry name" value="Anticodon_Met"/>
</dbReference>
<dbReference type="InterPro" id="IPR023458">
    <property type="entry name" value="Met-tRNA_ligase_1"/>
</dbReference>
<dbReference type="InterPro" id="IPR014758">
    <property type="entry name" value="Met-tRNA_synth"/>
</dbReference>
<dbReference type="InterPro" id="IPR015413">
    <property type="entry name" value="Methionyl/Leucyl_tRNA_Synth"/>
</dbReference>
<dbReference type="InterPro" id="IPR033911">
    <property type="entry name" value="MetRS_core"/>
</dbReference>
<dbReference type="InterPro" id="IPR029038">
    <property type="entry name" value="MetRS_Zn"/>
</dbReference>
<dbReference type="InterPro" id="IPR014729">
    <property type="entry name" value="Rossmann-like_a/b/a_fold"/>
</dbReference>
<dbReference type="InterPro" id="IPR009080">
    <property type="entry name" value="tRNAsynth_Ia_anticodon-bd"/>
</dbReference>
<dbReference type="NCBIfam" id="TIGR00398">
    <property type="entry name" value="metG"/>
    <property type="match status" value="1"/>
</dbReference>
<dbReference type="PANTHER" id="PTHR45765">
    <property type="entry name" value="METHIONINE--TRNA LIGASE"/>
    <property type="match status" value="1"/>
</dbReference>
<dbReference type="PANTHER" id="PTHR45765:SF1">
    <property type="entry name" value="METHIONINE--TRNA LIGASE, CYTOPLASMIC"/>
    <property type="match status" value="1"/>
</dbReference>
<dbReference type="Pfam" id="PF19303">
    <property type="entry name" value="Anticodon_3"/>
    <property type="match status" value="1"/>
</dbReference>
<dbReference type="Pfam" id="PF09334">
    <property type="entry name" value="tRNA-synt_1g"/>
    <property type="match status" value="1"/>
</dbReference>
<dbReference type="PRINTS" id="PR01041">
    <property type="entry name" value="TRNASYNTHMET"/>
</dbReference>
<dbReference type="SUPFAM" id="SSF47323">
    <property type="entry name" value="Anticodon-binding domain of a subclass of class I aminoacyl-tRNA synthetases"/>
    <property type="match status" value="1"/>
</dbReference>
<dbReference type="SUPFAM" id="SSF57770">
    <property type="entry name" value="Methionyl-tRNA synthetase (MetRS), Zn-domain"/>
    <property type="match status" value="1"/>
</dbReference>
<dbReference type="SUPFAM" id="SSF52374">
    <property type="entry name" value="Nucleotidylyl transferase"/>
    <property type="match status" value="1"/>
</dbReference>
<reference key="1">
    <citation type="journal article" date="2007" name="Nat. Biotechnol.">
        <title>Complete genome sequence of the erythromycin-producing bacterium Saccharopolyspora erythraea NRRL23338.</title>
        <authorList>
            <person name="Oliynyk M."/>
            <person name="Samborskyy M."/>
            <person name="Lester J.B."/>
            <person name="Mironenko T."/>
            <person name="Scott N."/>
            <person name="Dickens S."/>
            <person name="Haydock S.F."/>
            <person name="Leadlay P.F."/>
        </authorList>
    </citation>
    <scope>NUCLEOTIDE SEQUENCE [LARGE SCALE GENOMIC DNA]</scope>
    <source>
        <strain>ATCC 11635 / DSM 40517 / JCM 4748 / NBRC 13426 / NCIMB 8594 / NRRL 2338</strain>
    </source>
</reference>
<feature type="chain" id="PRO_0000331895" description="Methionine--tRNA ligase">
    <location>
        <begin position="1"/>
        <end position="593"/>
    </location>
</feature>
<feature type="short sequence motif" description="'HIGH' region">
    <location>
        <begin position="7"/>
        <end position="17"/>
    </location>
</feature>
<feature type="short sequence motif" description="'KMSKS' region">
    <location>
        <begin position="343"/>
        <end position="347"/>
    </location>
</feature>
<feature type="binding site" evidence="1">
    <location>
        <position position="139"/>
    </location>
    <ligand>
        <name>Zn(2+)</name>
        <dbReference type="ChEBI" id="CHEBI:29105"/>
    </ligand>
</feature>
<feature type="binding site" evidence="1">
    <location>
        <position position="142"/>
    </location>
    <ligand>
        <name>Zn(2+)</name>
        <dbReference type="ChEBI" id="CHEBI:29105"/>
    </ligand>
</feature>
<feature type="binding site" evidence="1">
    <location>
        <position position="152"/>
    </location>
    <ligand>
        <name>Zn(2+)</name>
        <dbReference type="ChEBI" id="CHEBI:29105"/>
    </ligand>
</feature>
<feature type="binding site" evidence="1">
    <location>
        <position position="155"/>
    </location>
    <ligand>
        <name>Zn(2+)</name>
        <dbReference type="ChEBI" id="CHEBI:29105"/>
    </ligand>
</feature>
<feature type="binding site" evidence="1">
    <location>
        <position position="346"/>
    </location>
    <ligand>
        <name>ATP</name>
        <dbReference type="ChEBI" id="CHEBI:30616"/>
    </ligand>
</feature>